<accession>B3LJ84</accession>
<reference key="1">
    <citation type="submission" date="2005-03" db="EMBL/GenBank/DDBJ databases">
        <title>Annotation of the Saccharomyces cerevisiae RM11-1a genome.</title>
        <authorList>
            <consortium name="The Broad Institute Genome Sequencing Platform"/>
            <person name="Birren B.W."/>
            <person name="Lander E.S."/>
            <person name="Galagan J.E."/>
            <person name="Nusbaum C."/>
            <person name="Devon K."/>
            <person name="Cuomo C."/>
            <person name="Jaffe D.B."/>
            <person name="Butler J."/>
            <person name="Alvarez P."/>
            <person name="Gnerre S."/>
            <person name="Grabherr M."/>
            <person name="Kleber M."/>
            <person name="Mauceli E.W."/>
            <person name="Brockman W."/>
            <person name="MacCallum I.A."/>
            <person name="Rounsley S."/>
            <person name="Young S.K."/>
            <person name="LaButti K."/>
            <person name="Pushparaj V."/>
            <person name="DeCaprio D."/>
            <person name="Crawford M."/>
            <person name="Koehrsen M."/>
            <person name="Engels R."/>
            <person name="Montgomery P."/>
            <person name="Pearson M."/>
            <person name="Howarth C."/>
            <person name="Larson L."/>
            <person name="Luoma S."/>
            <person name="White J."/>
            <person name="O'Leary S."/>
            <person name="Kodira C.D."/>
            <person name="Zeng Q."/>
            <person name="Yandava C."/>
            <person name="Alvarado L."/>
            <person name="Pratt S."/>
            <person name="Kruglyak L."/>
        </authorList>
    </citation>
    <scope>NUCLEOTIDE SEQUENCE [LARGE SCALE GENOMIC DNA]</scope>
    <source>
        <strain>RM11-1a</strain>
    </source>
</reference>
<evidence type="ECO:0000250" key="1"/>
<evidence type="ECO:0000305" key="2"/>
<organism>
    <name type="scientific">Saccharomyces cerevisiae (strain RM11-1a)</name>
    <name type="common">Baker's yeast</name>
    <dbReference type="NCBI Taxonomy" id="285006"/>
    <lineage>
        <taxon>Eukaryota</taxon>
        <taxon>Fungi</taxon>
        <taxon>Dikarya</taxon>
        <taxon>Ascomycota</taxon>
        <taxon>Saccharomycotina</taxon>
        <taxon>Saccharomycetes</taxon>
        <taxon>Saccharomycetales</taxon>
        <taxon>Saccharomycetaceae</taxon>
        <taxon>Saccharomyces</taxon>
    </lineage>
</organism>
<feature type="chain" id="PRO_0000392086" description="Metallothionein-like protein CRS5">
    <location>
        <begin position="1"/>
        <end position="69"/>
    </location>
</feature>
<comment type="function">
    <text evidence="1">Critical role in copper (specific) homeostasis and detoxification. May protect by directly chelating and sequestering copper ions (By similarity).</text>
</comment>
<comment type="similarity">
    <text evidence="2">Belongs to the metallothionein superfamily. Type 13 family.</text>
</comment>
<name>CRS5_YEAS1</name>
<dbReference type="EMBL" id="CH408045">
    <property type="protein sequence ID" value="EDV10637.1"/>
    <property type="molecule type" value="Genomic_DNA"/>
</dbReference>
<dbReference type="SMR" id="B3LJ84"/>
<dbReference type="HOGENOM" id="CLU_2777367_0_0_1"/>
<dbReference type="OrthoDB" id="43068at4893"/>
<dbReference type="Proteomes" id="UP000008335">
    <property type="component" value="Unassembled WGS sequence"/>
</dbReference>
<dbReference type="GO" id="GO:0046872">
    <property type="term" value="F:metal ion binding"/>
    <property type="evidence" value="ECO:0007669"/>
    <property type="project" value="UniProtKB-KW"/>
</dbReference>
<dbReference type="InterPro" id="IPR035715">
    <property type="entry name" value="Crs5"/>
</dbReference>
<dbReference type="Pfam" id="PF12809">
    <property type="entry name" value="Metallothi_Euk2"/>
    <property type="match status" value="1"/>
</dbReference>
<sequence>MTVKICDCEGECCKDSCHCGSTCLPSCSGGEKCKCDHSTGSPQCKSCGEKCKCETTCTCEKSKCNCEKC</sequence>
<proteinExistence type="inferred from homology"/>
<gene>
    <name type="primary">CRS5</name>
    <name type="ORF">SCRG_01432</name>
</gene>
<protein>
    <recommendedName>
        <fullName>Metallothionein-like protein CRS5</fullName>
    </recommendedName>
</protein>
<keyword id="KW-0186">Copper</keyword>
<keyword id="KW-0479">Metal-binding</keyword>
<keyword id="KW-0480">Metal-thiolate cluster</keyword>